<feature type="chain" id="PRO_1000067481" description="Small ribosomal subunit protein uS8">
    <location>
        <begin position="1"/>
        <end position="132"/>
    </location>
</feature>
<organism>
    <name type="scientific">Alkaliphilus metalliredigens (strain QYMF)</name>
    <dbReference type="NCBI Taxonomy" id="293826"/>
    <lineage>
        <taxon>Bacteria</taxon>
        <taxon>Bacillati</taxon>
        <taxon>Bacillota</taxon>
        <taxon>Clostridia</taxon>
        <taxon>Peptostreptococcales</taxon>
        <taxon>Natronincolaceae</taxon>
        <taxon>Alkaliphilus</taxon>
    </lineage>
</organism>
<keyword id="KW-1185">Reference proteome</keyword>
<keyword id="KW-0687">Ribonucleoprotein</keyword>
<keyword id="KW-0689">Ribosomal protein</keyword>
<keyword id="KW-0694">RNA-binding</keyword>
<keyword id="KW-0699">rRNA-binding</keyword>
<sequence length="132" mass="14437">MTMTDPIADMLTRIRNASAVKHDTVDVPASNMKKDIANILLNEGFIKGFDVIEDGKQGILRLQLKYGQSKERVITGIKRISKPGLKVYAKRDEIPRVLGGLGIAIISTSKGITTDKVARKEGVGGEVIAYIW</sequence>
<gene>
    <name evidence="1" type="primary">rpsH</name>
    <name type="ordered locus">Amet_4464</name>
</gene>
<accession>A6TWG8</accession>
<protein>
    <recommendedName>
        <fullName evidence="1">Small ribosomal subunit protein uS8</fullName>
    </recommendedName>
    <alternativeName>
        <fullName evidence="2">30S ribosomal protein S8</fullName>
    </alternativeName>
</protein>
<dbReference type="EMBL" id="CP000724">
    <property type="protein sequence ID" value="ABR50536.1"/>
    <property type="molecule type" value="Genomic_DNA"/>
</dbReference>
<dbReference type="RefSeq" id="WP_012065427.1">
    <property type="nucleotide sequence ID" value="NC_009633.1"/>
</dbReference>
<dbReference type="SMR" id="A6TWG8"/>
<dbReference type="STRING" id="293826.Amet_4464"/>
<dbReference type="KEGG" id="amt:Amet_4464"/>
<dbReference type="eggNOG" id="COG0096">
    <property type="taxonomic scope" value="Bacteria"/>
</dbReference>
<dbReference type="HOGENOM" id="CLU_098428_0_2_9"/>
<dbReference type="OrthoDB" id="9802617at2"/>
<dbReference type="Proteomes" id="UP000001572">
    <property type="component" value="Chromosome"/>
</dbReference>
<dbReference type="GO" id="GO:1990904">
    <property type="term" value="C:ribonucleoprotein complex"/>
    <property type="evidence" value="ECO:0007669"/>
    <property type="project" value="UniProtKB-KW"/>
</dbReference>
<dbReference type="GO" id="GO:0005840">
    <property type="term" value="C:ribosome"/>
    <property type="evidence" value="ECO:0007669"/>
    <property type="project" value="UniProtKB-KW"/>
</dbReference>
<dbReference type="GO" id="GO:0019843">
    <property type="term" value="F:rRNA binding"/>
    <property type="evidence" value="ECO:0007669"/>
    <property type="project" value="UniProtKB-UniRule"/>
</dbReference>
<dbReference type="GO" id="GO:0003735">
    <property type="term" value="F:structural constituent of ribosome"/>
    <property type="evidence" value="ECO:0007669"/>
    <property type="project" value="InterPro"/>
</dbReference>
<dbReference type="GO" id="GO:0006412">
    <property type="term" value="P:translation"/>
    <property type="evidence" value="ECO:0007669"/>
    <property type="project" value="UniProtKB-UniRule"/>
</dbReference>
<dbReference type="FunFam" id="3.30.1370.30:FF:000002">
    <property type="entry name" value="30S ribosomal protein S8"/>
    <property type="match status" value="1"/>
</dbReference>
<dbReference type="FunFam" id="3.30.1490.10:FF:000001">
    <property type="entry name" value="30S ribosomal protein S8"/>
    <property type="match status" value="1"/>
</dbReference>
<dbReference type="Gene3D" id="3.30.1370.30">
    <property type="match status" value="1"/>
</dbReference>
<dbReference type="Gene3D" id="3.30.1490.10">
    <property type="match status" value="1"/>
</dbReference>
<dbReference type="HAMAP" id="MF_01302_B">
    <property type="entry name" value="Ribosomal_uS8_B"/>
    <property type="match status" value="1"/>
</dbReference>
<dbReference type="InterPro" id="IPR000630">
    <property type="entry name" value="Ribosomal_uS8"/>
</dbReference>
<dbReference type="InterPro" id="IPR035987">
    <property type="entry name" value="Ribosomal_uS8_sf"/>
</dbReference>
<dbReference type="NCBIfam" id="NF001109">
    <property type="entry name" value="PRK00136.1"/>
    <property type="match status" value="1"/>
</dbReference>
<dbReference type="PANTHER" id="PTHR11758">
    <property type="entry name" value="40S RIBOSOMAL PROTEIN S15A"/>
    <property type="match status" value="1"/>
</dbReference>
<dbReference type="Pfam" id="PF00410">
    <property type="entry name" value="Ribosomal_S8"/>
    <property type="match status" value="1"/>
</dbReference>
<dbReference type="SUPFAM" id="SSF56047">
    <property type="entry name" value="Ribosomal protein S8"/>
    <property type="match status" value="1"/>
</dbReference>
<proteinExistence type="inferred from homology"/>
<comment type="function">
    <text evidence="1">One of the primary rRNA binding proteins, it binds directly to 16S rRNA central domain where it helps coordinate assembly of the platform of the 30S subunit.</text>
</comment>
<comment type="subunit">
    <text evidence="1">Part of the 30S ribosomal subunit. Contacts proteins S5 and S12.</text>
</comment>
<comment type="similarity">
    <text evidence="1">Belongs to the universal ribosomal protein uS8 family.</text>
</comment>
<evidence type="ECO:0000255" key="1">
    <source>
        <dbReference type="HAMAP-Rule" id="MF_01302"/>
    </source>
</evidence>
<evidence type="ECO:0000305" key="2"/>
<name>RS8_ALKMQ</name>
<reference key="1">
    <citation type="journal article" date="2016" name="Genome Announc.">
        <title>Complete genome sequence of Alkaliphilus metalliredigens strain QYMF, an alkaliphilic and metal-reducing bacterium isolated from borax-contaminated leachate ponds.</title>
        <authorList>
            <person name="Hwang C."/>
            <person name="Copeland A."/>
            <person name="Lucas S."/>
            <person name="Lapidus A."/>
            <person name="Barry K."/>
            <person name="Detter J.C."/>
            <person name="Glavina Del Rio T."/>
            <person name="Hammon N."/>
            <person name="Israni S."/>
            <person name="Dalin E."/>
            <person name="Tice H."/>
            <person name="Pitluck S."/>
            <person name="Chertkov O."/>
            <person name="Brettin T."/>
            <person name="Bruce D."/>
            <person name="Han C."/>
            <person name="Schmutz J."/>
            <person name="Larimer F."/>
            <person name="Land M.L."/>
            <person name="Hauser L."/>
            <person name="Kyrpides N."/>
            <person name="Mikhailova N."/>
            <person name="Ye Q."/>
            <person name="Zhou J."/>
            <person name="Richardson P."/>
            <person name="Fields M.W."/>
        </authorList>
    </citation>
    <scope>NUCLEOTIDE SEQUENCE [LARGE SCALE GENOMIC DNA]</scope>
    <source>
        <strain>QYMF</strain>
    </source>
</reference>